<dbReference type="EMBL" id="CP001129">
    <property type="protein sequence ID" value="ACG61815.1"/>
    <property type="molecule type" value="Genomic_DNA"/>
</dbReference>
<dbReference type="RefSeq" id="WP_012515091.1">
    <property type="nucleotide sequence ID" value="NC_011134.1"/>
</dbReference>
<dbReference type="SMR" id="B4U1E8"/>
<dbReference type="KEGG" id="sez:Sez_0443"/>
<dbReference type="HOGENOM" id="CLU_006301_5_0_9"/>
<dbReference type="Proteomes" id="UP000001873">
    <property type="component" value="Chromosome"/>
</dbReference>
<dbReference type="GO" id="GO:0005829">
    <property type="term" value="C:cytosol"/>
    <property type="evidence" value="ECO:0007669"/>
    <property type="project" value="TreeGrafter"/>
</dbReference>
<dbReference type="GO" id="GO:0005525">
    <property type="term" value="F:GTP binding"/>
    <property type="evidence" value="ECO:0007669"/>
    <property type="project" value="UniProtKB-KW"/>
</dbReference>
<dbReference type="GO" id="GO:0003924">
    <property type="term" value="F:GTPase activity"/>
    <property type="evidence" value="ECO:0007669"/>
    <property type="project" value="UniProtKB-UniRule"/>
</dbReference>
<dbReference type="GO" id="GO:0003743">
    <property type="term" value="F:translation initiation factor activity"/>
    <property type="evidence" value="ECO:0007669"/>
    <property type="project" value="UniProtKB-UniRule"/>
</dbReference>
<dbReference type="CDD" id="cd01887">
    <property type="entry name" value="IF2_eIF5B"/>
    <property type="match status" value="1"/>
</dbReference>
<dbReference type="CDD" id="cd03702">
    <property type="entry name" value="IF2_mtIF2_II"/>
    <property type="match status" value="1"/>
</dbReference>
<dbReference type="CDD" id="cd03692">
    <property type="entry name" value="mtIF2_IVc"/>
    <property type="match status" value="1"/>
</dbReference>
<dbReference type="FunFam" id="2.40.30.10:FF:000007">
    <property type="entry name" value="Translation initiation factor IF-2"/>
    <property type="match status" value="1"/>
</dbReference>
<dbReference type="FunFam" id="2.40.30.10:FF:000008">
    <property type="entry name" value="Translation initiation factor IF-2"/>
    <property type="match status" value="1"/>
</dbReference>
<dbReference type="FunFam" id="3.40.50.10050:FF:000001">
    <property type="entry name" value="Translation initiation factor IF-2"/>
    <property type="match status" value="1"/>
</dbReference>
<dbReference type="FunFam" id="3.40.50.300:FF:000019">
    <property type="entry name" value="Translation initiation factor IF-2"/>
    <property type="match status" value="1"/>
</dbReference>
<dbReference type="Gene3D" id="1.10.10.2480">
    <property type="match status" value="1"/>
</dbReference>
<dbReference type="Gene3D" id="3.40.50.300">
    <property type="entry name" value="P-loop containing nucleotide triphosphate hydrolases"/>
    <property type="match status" value="1"/>
</dbReference>
<dbReference type="Gene3D" id="2.40.30.10">
    <property type="entry name" value="Translation factors"/>
    <property type="match status" value="2"/>
</dbReference>
<dbReference type="Gene3D" id="3.40.50.10050">
    <property type="entry name" value="Translation initiation factor IF- 2, domain 3"/>
    <property type="match status" value="1"/>
</dbReference>
<dbReference type="HAMAP" id="MF_00100_B">
    <property type="entry name" value="IF_2_B"/>
    <property type="match status" value="1"/>
</dbReference>
<dbReference type="InterPro" id="IPR053905">
    <property type="entry name" value="EF-G-like_DII"/>
</dbReference>
<dbReference type="InterPro" id="IPR044145">
    <property type="entry name" value="IF2_II"/>
</dbReference>
<dbReference type="InterPro" id="IPR006847">
    <property type="entry name" value="IF2_N"/>
</dbReference>
<dbReference type="InterPro" id="IPR027417">
    <property type="entry name" value="P-loop_NTPase"/>
</dbReference>
<dbReference type="InterPro" id="IPR005225">
    <property type="entry name" value="Small_GTP-bd"/>
</dbReference>
<dbReference type="InterPro" id="IPR000795">
    <property type="entry name" value="T_Tr_GTP-bd_dom"/>
</dbReference>
<dbReference type="InterPro" id="IPR000178">
    <property type="entry name" value="TF_IF2_bacterial-like"/>
</dbReference>
<dbReference type="InterPro" id="IPR015760">
    <property type="entry name" value="TIF_IF2"/>
</dbReference>
<dbReference type="InterPro" id="IPR023115">
    <property type="entry name" value="TIF_IF2_dom3"/>
</dbReference>
<dbReference type="InterPro" id="IPR036925">
    <property type="entry name" value="TIF_IF2_dom3_sf"/>
</dbReference>
<dbReference type="InterPro" id="IPR009000">
    <property type="entry name" value="Transl_B-barrel_sf"/>
</dbReference>
<dbReference type="NCBIfam" id="TIGR00487">
    <property type="entry name" value="IF-2"/>
    <property type="match status" value="1"/>
</dbReference>
<dbReference type="NCBIfam" id="TIGR00231">
    <property type="entry name" value="small_GTP"/>
    <property type="match status" value="1"/>
</dbReference>
<dbReference type="PANTHER" id="PTHR43381:SF5">
    <property type="entry name" value="TR-TYPE G DOMAIN-CONTAINING PROTEIN"/>
    <property type="match status" value="1"/>
</dbReference>
<dbReference type="PANTHER" id="PTHR43381">
    <property type="entry name" value="TRANSLATION INITIATION FACTOR IF-2-RELATED"/>
    <property type="match status" value="1"/>
</dbReference>
<dbReference type="Pfam" id="PF22042">
    <property type="entry name" value="EF-G_D2"/>
    <property type="match status" value="1"/>
</dbReference>
<dbReference type="Pfam" id="PF00009">
    <property type="entry name" value="GTP_EFTU"/>
    <property type="match status" value="1"/>
</dbReference>
<dbReference type="Pfam" id="PF11987">
    <property type="entry name" value="IF-2"/>
    <property type="match status" value="1"/>
</dbReference>
<dbReference type="Pfam" id="PF04760">
    <property type="entry name" value="IF2_N"/>
    <property type="match status" value="2"/>
</dbReference>
<dbReference type="PRINTS" id="PR00449">
    <property type="entry name" value="RASTRNSFRMNG"/>
</dbReference>
<dbReference type="SUPFAM" id="SSF52156">
    <property type="entry name" value="Initiation factor IF2/eIF5b, domain 3"/>
    <property type="match status" value="1"/>
</dbReference>
<dbReference type="SUPFAM" id="SSF52540">
    <property type="entry name" value="P-loop containing nucleoside triphosphate hydrolases"/>
    <property type="match status" value="1"/>
</dbReference>
<dbReference type="SUPFAM" id="SSF50447">
    <property type="entry name" value="Translation proteins"/>
    <property type="match status" value="2"/>
</dbReference>
<dbReference type="PROSITE" id="PS51722">
    <property type="entry name" value="G_TR_2"/>
    <property type="match status" value="1"/>
</dbReference>
<dbReference type="PROSITE" id="PS01176">
    <property type="entry name" value="IF2"/>
    <property type="match status" value="1"/>
</dbReference>
<gene>
    <name evidence="2" type="primary">infB</name>
    <name type="ordered locus">Sez_0443</name>
</gene>
<proteinExistence type="inferred from homology"/>
<protein>
    <recommendedName>
        <fullName evidence="2">Translation initiation factor IF-2</fullName>
    </recommendedName>
</protein>
<organism>
    <name type="scientific">Streptococcus equi subsp. zooepidemicus (strain MGCS10565)</name>
    <dbReference type="NCBI Taxonomy" id="552526"/>
    <lineage>
        <taxon>Bacteria</taxon>
        <taxon>Bacillati</taxon>
        <taxon>Bacillota</taxon>
        <taxon>Bacilli</taxon>
        <taxon>Lactobacillales</taxon>
        <taxon>Streptococcaceae</taxon>
        <taxon>Streptococcus</taxon>
    </lineage>
</organism>
<comment type="function">
    <text evidence="2">One of the essential components for the initiation of protein synthesis. Protects formylmethionyl-tRNA from spontaneous hydrolysis and promotes its binding to the 30S ribosomal subunits. Also involved in the hydrolysis of GTP during the formation of the 70S ribosomal complex.</text>
</comment>
<comment type="subcellular location">
    <subcellularLocation>
        <location evidence="2">Cytoplasm</location>
    </subcellularLocation>
</comment>
<comment type="similarity">
    <text evidence="2">Belongs to the TRAFAC class translation factor GTPase superfamily. Classic translation factor GTPase family. IF-2 subfamily.</text>
</comment>
<accession>B4U1E8</accession>
<sequence length="947" mass="103969">MSKKRLHEIAKEIGKSSKEVVERAKSLGLDVKSHASSVEEADANKIASSFAAGVTKDAQAGSAKDKQVAEQKAKAAKATTPQPAAATQEASQPVAVKPKSRNFKAEREARAKEQAARRQAGQNRSNDRKSDYRQLGRSQGQQTERAGHKSQNQQRDRRFDNRPSSGNNRNDGHRQAGNRDKNRSFNANSRQQDTGRQGQTQAGAPKIDFKARAAALKAEQNAEYARQRESRFREQEEAKRLEQQARQEAKAAALKAQTEDKKHREASAKATEPIASMAAAPVAKPVDKRRKKQNRPDKGHDRDHGLEDGQKKNKKSWNSQNQVRNQKNSNWNNNKKNKKGKHHKNSNTAPKPVTERKFHELPKEFEYSEGMTVAEIAKRIKREPAEIVKKLFMMGVMATQNQSLDGDTIELLMVDYGIEAKAKVEVDEADIERFFTDDSYLNPENIVERAPVVTIMGHVDHGKTTLLDTLRNSRVATGEAGGITQHIGAYQIEEAGKKITFLDTPGHAAFTSMRARGASVTDITILIVAADDGVMPQTIEAINHSKAAGVPIIVAINKIDKPGANPERVISELAEHGIISTAWGGECEFVEISAKFNKNIDELLETVLLVAEVEELKADPTVRAIGTVIEARLDKGKGAVATLLVQQGTLHVQDPIVVGNTFGRVRAMTNDLGRRVKSAEPSTPVSITGLNETPMAGDHFAVYADEKAARAAGEERAKRALLKQRQNTQRVSLDNLFDTLKAGEIKTVNVIIKADVQGSVEALAASLLKIDVEGVRVNVVHSAVGAINESDVTLAEASNAVIIGFNVRPTPQARQQADADDVEIRLHSIIYKVIEEVEEAMKGKLDPEYQEKVLGEAIIRETFKVSKVGTIGGFMVVNGKVTRDSSVRVIRDSVVIFDGKLASLKHYKDDVKEIGNAQEGGLMIEGFNDIKVDDTIEAYVMEEIIRK</sequence>
<reference key="1">
    <citation type="journal article" date="2008" name="PLoS ONE">
        <title>Genome sequence of a lancefield group C Streptococcus zooepidemicus strain causing epidemic nephritis: new information about an old disease.</title>
        <authorList>
            <person name="Beres S.B."/>
            <person name="Sesso R."/>
            <person name="Pinto S.W.L."/>
            <person name="Hoe N.P."/>
            <person name="Porcella S.F."/>
            <person name="Deleo F.R."/>
            <person name="Musser J.M."/>
        </authorList>
    </citation>
    <scope>NUCLEOTIDE SEQUENCE [LARGE SCALE GENOMIC DNA]</scope>
    <source>
        <strain>MGCS10565</strain>
    </source>
</reference>
<name>IF2_STREM</name>
<feature type="chain" id="PRO_1000093827" description="Translation initiation factor IF-2">
    <location>
        <begin position="1"/>
        <end position="947"/>
    </location>
</feature>
<feature type="domain" description="tr-type G">
    <location>
        <begin position="448"/>
        <end position="617"/>
    </location>
</feature>
<feature type="region of interest" description="Disordered" evidence="3">
    <location>
        <begin position="55"/>
        <end position="361"/>
    </location>
</feature>
<feature type="region of interest" description="G1" evidence="1">
    <location>
        <begin position="457"/>
        <end position="464"/>
    </location>
</feature>
<feature type="region of interest" description="G2" evidence="1">
    <location>
        <begin position="482"/>
        <end position="486"/>
    </location>
</feature>
<feature type="region of interest" description="G3" evidence="1">
    <location>
        <begin position="503"/>
        <end position="506"/>
    </location>
</feature>
<feature type="region of interest" description="G4" evidence="1">
    <location>
        <begin position="557"/>
        <end position="560"/>
    </location>
</feature>
<feature type="region of interest" description="G5" evidence="1">
    <location>
        <begin position="593"/>
        <end position="595"/>
    </location>
</feature>
<feature type="compositionally biased region" description="Basic and acidic residues" evidence="3">
    <location>
        <begin position="63"/>
        <end position="73"/>
    </location>
</feature>
<feature type="compositionally biased region" description="Low complexity" evidence="3">
    <location>
        <begin position="76"/>
        <end position="90"/>
    </location>
</feature>
<feature type="compositionally biased region" description="Basic and acidic residues" evidence="3">
    <location>
        <begin position="103"/>
        <end position="116"/>
    </location>
</feature>
<feature type="compositionally biased region" description="Basic and acidic residues" evidence="3">
    <location>
        <begin position="125"/>
        <end position="134"/>
    </location>
</feature>
<feature type="compositionally biased region" description="Basic and acidic residues" evidence="3">
    <location>
        <begin position="170"/>
        <end position="183"/>
    </location>
</feature>
<feature type="compositionally biased region" description="Low complexity" evidence="3">
    <location>
        <begin position="190"/>
        <end position="204"/>
    </location>
</feature>
<feature type="compositionally biased region" description="Basic and acidic residues" evidence="3">
    <location>
        <begin position="225"/>
        <end position="249"/>
    </location>
</feature>
<feature type="compositionally biased region" description="Basic and acidic residues" evidence="3">
    <location>
        <begin position="257"/>
        <end position="267"/>
    </location>
</feature>
<feature type="compositionally biased region" description="Basic and acidic residues" evidence="3">
    <location>
        <begin position="294"/>
        <end position="311"/>
    </location>
</feature>
<feature type="compositionally biased region" description="Low complexity" evidence="3">
    <location>
        <begin position="316"/>
        <end position="334"/>
    </location>
</feature>
<feature type="compositionally biased region" description="Basic residues" evidence="3">
    <location>
        <begin position="335"/>
        <end position="345"/>
    </location>
</feature>
<feature type="binding site" evidence="2">
    <location>
        <begin position="457"/>
        <end position="464"/>
    </location>
    <ligand>
        <name>GTP</name>
        <dbReference type="ChEBI" id="CHEBI:37565"/>
    </ligand>
</feature>
<feature type="binding site" evidence="2">
    <location>
        <begin position="503"/>
        <end position="507"/>
    </location>
    <ligand>
        <name>GTP</name>
        <dbReference type="ChEBI" id="CHEBI:37565"/>
    </ligand>
</feature>
<feature type="binding site" evidence="2">
    <location>
        <begin position="557"/>
        <end position="560"/>
    </location>
    <ligand>
        <name>GTP</name>
        <dbReference type="ChEBI" id="CHEBI:37565"/>
    </ligand>
</feature>
<keyword id="KW-0963">Cytoplasm</keyword>
<keyword id="KW-0342">GTP-binding</keyword>
<keyword id="KW-0396">Initiation factor</keyword>
<keyword id="KW-0547">Nucleotide-binding</keyword>
<keyword id="KW-0648">Protein biosynthesis</keyword>
<evidence type="ECO:0000250" key="1"/>
<evidence type="ECO:0000255" key="2">
    <source>
        <dbReference type="HAMAP-Rule" id="MF_00100"/>
    </source>
</evidence>
<evidence type="ECO:0000256" key="3">
    <source>
        <dbReference type="SAM" id="MobiDB-lite"/>
    </source>
</evidence>